<gene>
    <name type="primary">mgtC</name>
    <name type="ordered locus">BruAb2_0040</name>
</gene>
<evidence type="ECO:0000250" key="1"/>
<evidence type="ECO:0000255" key="2"/>
<evidence type="ECO:0000305" key="3"/>
<reference key="1">
    <citation type="journal article" date="2005" name="J. Bacteriol.">
        <title>Completion of the genome sequence of Brucella abortus and comparison to the highly similar genomes of Brucella melitensis and Brucella suis.</title>
        <authorList>
            <person name="Halling S.M."/>
            <person name="Peterson-Burch B.D."/>
            <person name="Bricker B.J."/>
            <person name="Zuerner R.L."/>
            <person name="Qing Z."/>
            <person name="Li L.-L."/>
            <person name="Kapur V."/>
            <person name="Alt D.P."/>
            <person name="Olsen S.C."/>
        </authorList>
    </citation>
    <scope>NUCLEOTIDE SEQUENCE [LARGE SCALE GENOMIC DNA]</scope>
    <source>
        <strain>9-941</strain>
    </source>
</reference>
<accession>Q57A43</accession>
<organism>
    <name type="scientific">Brucella abortus biovar 1 (strain 9-941)</name>
    <dbReference type="NCBI Taxonomy" id="262698"/>
    <lineage>
        <taxon>Bacteria</taxon>
        <taxon>Pseudomonadati</taxon>
        <taxon>Pseudomonadota</taxon>
        <taxon>Alphaproteobacteria</taxon>
        <taxon>Hyphomicrobiales</taxon>
        <taxon>Brucellaceae</taxon>
        <taxon>Brucella/Ochrobactrum group</taxon>
        <taxon>Brucella</taxon>
    </lineage>
</organism>
<dbReference type="EMBL" id="AE017224">
    <property type="protein sequence ID" value="AAX75491.1"/>
    <property type="molecule type" value="Genomic_DNA"/>
</dbReference>
<dbReference type="RefSeq" id="WP_002966539.1">
    <property type="nucleotide sequence ID" value="NC_006933.1"/>
</dbReference>
<dbReference type="SMR" id="Q57A43"/>
<dbReference type="EnsemblBacteria" id="AAX75491">
    <property type="protein sequence ID" value="AAX75491"/>
    <property type="gene ID" value="BruAb2_0040"/>
</dbReference>
<dbReference type="KEGG" id="bmb:BruAb2_0040"/>
<dbReference type="HOGENOM" id="CLU_079292_0_0_5"/>
<dbReference type="Proteomes" id="UP000000540">
    <property type="component" value="Chromosome II"/>
</dbReference>
<dbReference type="GO" id="GO:0005886">
    <property type="term" value="C:plasma membrane"/>
    <property type="evidence" value="ECO:0007669"/>
    <property type="project" value="UniProtKB-SubCell"/>
</dbReference>
<dbReference type="Gene3D" id="3.30.70.260">
    <property type="match status" value="1"/>
</dbReference>
<dbReference type="InterPro" id="IPR048640">
    <property type="entry name" value="MgtC-like_C"/>
</dbReference>
<dbReference type="InterPro" id="IPR003416">
    <property type="entry name" value="MgtC/SapB/SrpB/YhiD_fam"/>
</dbReference>
<dbReference type="InterPro" id="IPR049177">
    <property type="entry name" value="MgtC_SapB_SrpB_YhiD_N"/>
</dbReference>
<dbReference type="PANTHER" id="PTHR33778">
    <property type="entry name" value="PROTEIN MGTC"/>
    <property type="match status" value="1"/>
</dbReference>
<dbReference type="PANTHER" id="PTHR33778:SF3">
    <property type="entry name" value="PROTEIN MGTC"/>
    <property type="match status" value="1"/>
</dbReference>
<dbReference type="Pfam" id="PF02308">
    <property type="entry name" value="MgtC"/>
    <property type="match status" value="1"/>
</dbReference>
<dbReference type="Pfam" id="PF21770">
    <property type="entry name" value="MgtC_SapB_C"/>
    <property type="match status" value="1"/>
</dbReference>
<dbReference type="PRINTS" id="PR01837">
    <property type="entry name" value="MGTCSAPBPROT"/>
</dbReference>
<comment type="function">
    <text evidence="1">Virulence factor required for growth in low Mg(2+) medium and for intramacrophage survival. May be involved in regulating membrane potential by activating Na(+)/K(+)-ATPase (By similarity).</text>
</comment>
<comment type="subcellular location">
    <subcellularLocation>
        <location evidence="3">Cell inner membrane</location>
        <topology evidence="3">Multi-pass membrane protein</topology>
    </subcellularLocation>
</comment>
<comment type="similarity">
    <text evidence="3">Belongs to the MgtC/SapB family.</text>
</comment>
<protein>
    <recommendedName>
        <fullName>Protein MgtC</fullName>
    </recommendedName>
</protein>
<keyword id="KW-0997">Cell inner membrane</keyword>
<keyword id="KW-1003">Cell membrane</keyword>
<keyword id="KW-0472">Membrane</keyword>
<keyword id="KW-0812">Transmembrane</keyword>
<keyword id="KW-1133">Transmembrane helix</keyword>
<keyword id="KW-0843">Virulence</keyword>
<name>MGTC_BRUAB</name>
<feature type="chain" id="PRO_0000250523" description="Protein MgtC">
    <location>
        <begin position="1"/>
        <end position="238"/>
    </location>
</feature>
<feature type="transmembrane region" description="Helical" evidence="2">
    <location>
        <begin position="5"/>
        <end position="25"/>
    </location>
</feature>
<feature type="transmembrane region" description="Helical" evidence="2">
    <location>
        <begin position="38"/>
        <end position="58"/>
    </location>
</feature>
<feature type="transmembrane region" description="Helical" evidence="2">
    <location>
        <begin position="66"/>
        <end position="86"/>
    </location>
</feature>
<feature type="transmembrane region" description="Helical" evidence="2">
    <location>
        <begin position="105"/>
        <end position="125"/>
    </location>
</feature>
<sequence length="238" mass="25357">MVWKPLAHTAACLAGAFLLGGLIGFERQFRHRLAGLRTNTLVAVGAATFVVFSSLVSGDSSPTRVAAQIVSGIGFLGAGIIFKEGFNVRGLNTAATLWCSAAVGVLCGAGLISHAAVATVFIIAVNALLRPLVQVLEFQAMRRGAFQPTYAIDIICHGDAEAQVRALLLRDIGDHLHIHELESSNIEGTNRVEVSATVRADQRQDRLLEQIVGHLSLEPRITSARWRIEDDSGGLSGL</sequence>
<proteinExistence type="inferred from homology"/>